<feature type="initiator methionine" description="Removed" evidence="2">
    <location>
        <position position="1"/>
    </location>
</feature>
<feature type="chain" id="PRO_0000236188" description="Isocitrate dehydrogenase [NADP] cytoplasmic">
    <location>
        <begin position="2"/>
        <end position="414"/>
    </location>
</feature>
<feature type="binding site" evidence="2">
    <location>
        <begin position="75"/>
        <end position="77"/>
    </location>
    <ligand>
        <name>NADP(+)</name>
        <dbReference type="ChEBI" id="CHEBI:58349"/>
    </ligand>
</feature>
<feature type="binding site" description="in other chain" evidence="2">
    <location>
        <position position="77"/>
    </location>
    <ligand>
        <name>substrate</name>
        <note>ligand shared between two neighboring subunits</note>
    </ligand>
</feature>
<feature type="binding site" evidence="2">
    <location>
        <position position="82"/>
    </location>
    <ligand>
        <name>NADP(+)</name>
        <dbReference type="ChEBI" id="CHEBI:58349"/>
    </ligand>
</feature>
<feature type="binding site" description="in other chain" evidence="2">
    <location>
        <begin position="94"/>
        <end position="100"/>
    </location>
    <ligand>
        <name>substrate</name>
        <note>ligand shared between two neighboring subunits</note>
    </ligand>
</feature>
<feature type="binding site" description="in other chain" evidence="2">
    <location>
        <position position="109"/>
    </location>
    <ligand>
        <name>substrate</name>
        <note>ligand shared between two neighboring subunits</note>
    </ligand>
</feature>
<feature type="binding site" description="in other chain" evidence="2">
    <location>
        <position position="132"/>
    </location>
    <ligand>
        <name>substrate</name>
        <note>ligand shared between two neighboring subunits</note>
    </ligand>
</feature>
<feature type="binding site" evidence="3">
    <location>
        <position position="212"/>
    </location>
    <ligand>
        <name>substrate</name>
        <note>ligand shared between two neighboring subunits</note>
    </ligand>
</feature>
<feature type="binding site" evidence="2">
    <location>
        <position position="252"/>
    </location>
    <ligand>
        <name>Mn(2+)</name>
        <dbReference type="ChEBI" id="CHEBI:29035"/>
        <note>ligand shared between two neighboring subunits</note>
    </ligand>
</feature>
<feature type="binding site" evidence="2">
    <location>
        <position position="260"/>
    </location>
    <ligand>
        <name>NADP(+)</name>
        <dbReference type="ChEBI" id="CHEBI:58349"/>
    </ligand>
</feature>
<feature type="binding site" description="in other chain" evidence="2">
    <location>
        <position position="275"/>
    </location>
    <ligand>
        <name>Mn(2+)</name>
        <dbReference type="ChEBI" id="CHEBI:29035"/>
        <note>ligand shared between two neighboring subunits</note>
    </ligand>
</feature>
<feature type="binding site" description="in other chain" evidence="2">
    <location>
        <position position="279"/>
    </location>
    <ligand>
        <name>Mn(2+)</name>
        <dbReference type="ChEBI" id="CHEBI:29035"/>
        <note>ligand shared between two neighboring subunits</note>
    </ligand>
</feature>
<feature type="binding site" evidence="2">
    <location>
        <begin position="310"/>
        <end position="315"/>
    </location>
    <ligand>
        <name>NADP(+)</name>
        <dbReference type="ChEBI" id="CHEBI:58349"/>
    </ligand>
</feature>
<feature type="binding site" evidence="2">
    <location>
        <position position="328"/>
    </location>
    <ligand>
        <name>NADP(+)</name>
        <dbReference type="ChEBI" id="CHEBI:58349"/>
    </ligand>
</feature>
<feature type="site" description="Critical for catalysis" evidence="1">
    <location>
        <position position="139"/>
    </location>
</feature>
<feature type="site" description="Critical for catalysis" evidence="1">
    <location>
        <position position="212"/>
    </location>
</feature>
<feature type="modified residue" description="N-acetylserine" evidence="2">
    <location>
        <position position="2"/>
    </location>
</feature>
<feature type="modified residue" description="Phosphotyrosine" evidence="2">
    <location>
        <position position="42"/>
    </location>
</feature>
<feature type="modified residue" description="N6-acetyllysine" evidence="3">
    <location>
        <position position="81"/>
    </location>
</feature>
<feature type="modified residue" description="N6-succinyllysine" evidence="3">
    <location>
        <position position="126"/>
    </location>
</feature>
<feature type="modified residue" description="N6-acetyllysine" evidence="3">
    <location>
        <position position="224"/>
    </location>
</feature>
<feature type="modified residue" description="N6-acetyllysine" evidence="3">
    <location>
        <position position="233"/>
    </location>
</feature>
<feature type="modified residue" description="N6-acetyllysine" evidence="2">
    <location>
        <position position="321"/>
    </location>
</feature>
<feature type="modified residue" description="Phosphoserine" evidence="3">
    <location>
        <position position="389"/>
    </location>
</feature>
<feature type="modified residue" description="N6-succinyllysine" evidence="3">
    <location>
        <position position="400"/>
    </location>
</feature>
<feature type="sequence conflict" description="In Ref. 2; AAI03369." evidence="6" ref="2">
    <original>L</original>
    <variation>S</variation>
    <location>
        <position position="326"/>
    </location>
</feature>
<keyword id="KW-0007">Acetylation</keyword>
<keyword id="KW-0963">Cytoplasm</keyword>
<keyword id="KW-0329">Glyoxylate bypass</keyword>
<keyword id="KW-0460">Magnesium</keyword>
<keyword id="KW-0464">Manganese</keyword>
<keyword id="KW-0479">Metal-binding</keyword>
<keyword id="KW-0521">NADP</keyword>
<keyword id="KW-0560">Oxidoreductase</keyword>
<keyword id="KW-0597">Phosphoprotein</keyword>
<keyword id="KW-1185">Reference proteome</keyword>
<keyword id="KW-0816">Tricarboxylic acid cycle</keyword>
<gene>
    <name type="primary">IDH1</name>
    <name type="synonym">ICDH</name>
</gene>
<comment type="function">
    <text evidence="2 5">Catalyzes the NADP(+)-dependent oxidative decarboxylation of isocitrate (D-threo-isocitrate) to 2-ketoglutarate (2-oxoglutarate), which is required by other enzymes such as the phytanoyl-CoA dioxygenase (By similarity). Plays a critical role in the generation of NADPH, an important cofactor in many biosynthesis pathways (By similarity). May act as a corneal epithelial crystallin and may be involved in maintaining corneal epithelial transparency (PubMed:10358094).</text>
</comment>
<comment type="catalytic activity">
    <reaction evidence="3">
        <text>D-threo-isocitrate + NADP(+) = 2-oxoglutarate + CO2 + NADPH</text>
        <dbReference type="Rhea" id="RHEA:19629"/>
        <dbReference type="ChEBI" id="CHEBI:15562"/>
        <dbReference type="ChEBI" id="CHEBI:16526"/>
        <dbReference type="ChEBI" id="CHEBI:16810"/>
        <dbReference type="ChEBI" id="CHEBI:57783"/>
        <dbReference type="ChEBI" id="CHEBI:58349"/>
        <dbReference type="EC" id="1.1.1.42"/>
    </reaction>
    <physiologicalReaction direction="left-to-right" evidence="3">
        <dbReference type="Rhea" id="RHEA:19630"/>
    </physiologicalReaction>
</comment>
<comment type="cofactor">
    <cofactor evidence="3">
        <name>Mg(2+)</name>
        <dbReference type="ChEBI" id="CHEBI:18420"/>
    </cofactor>
    <cofactor evidence="3">
        <name>Mn(2+)</name>
        <dbReference type="ChEBI" id="CHEBI:29035"/>
    </cofactor>
    <text evidence="3">Binds 1 Mg(2+) or Mn(2+) ion per subunit.</text>
</comment>
<comment type="subunit">
    <text evidence="3">Homodimer.</text>
</comment>
<comment type="subcellular location">
    <subcellularLocation>
        <location evidence="4">Cytoplasm</location>
        <location evidence="4">Cytosol</location>
    </subcellularLocation>
</comment>
<comment type="tissue specificity">
    <text evidence="5">Expressed preferentially in corneal epithelium. Constitute approximately 13% of the total soluble bovine corneal epithelial proteins.</text>
</comment>
<comment type="PTM">
    <text evidence="1">Acetylation at Lys-374 dramatically reduces catalytic activity.</text>
</comment>
<comment type="similarity">
    <text evidence="6">Belongs to the isocitrate and isopropylmalate dehydrogenases family.</text>
</comment>
<name>IDHC_BOVIN</name>
<dbReference type="EC" id="1.1.1.42" evidence="3"/>
<dbReference type="EMBL" id="AF136009">
    <property type="protein sequence ID" value="AAD34457.1"/>
    <property type="molecule type" value="mRNA"/>
</dbReference>
<dbReference type="EMBL" id="BC103368">
    <property type="protein sequence ID" value="AAI03369.1"/>
    <property type="molecule type" value="mRNA"/>
</dbReference>
<dbReference type="RefSeq" id="NP_851355.2">
    <property type="nucleotide sequence ID" value="NM_181012.3"/>
</dbReference>
<dbReference type="RefSeq" id="XP_005202754.1">
    <property type="nucleotide sequence ID" value="XM_005202697.1"/>
</dbReference>
<dbReference type="SMR" id="Q9XSG3"/>
<dbReference type="BioGRID" id="158592">
    <property type="interactions" value="1"/>
</dbReference>
<dbReference type="FunCoup" id="Q9XSG3">
    <property type="interactions" value="2085"/>
</dbReference>
<dbReference type="STRING" id="9913.ENSBTAP00000027348"/>
<dbReference type="PaxDb" id="9913-ENSBTAP00000027348"/>
<dbReference type="PeptideAtlas" id="Q9XSG3"/>
<dbReference type="GeneID" id="281235"/>
<dbReference type="KEGG" id="bta:281235"/>
<dbReference type="CTD" id="3417"/>
<dbReference type="eggNOG" id="KOG1526">
    <property type="taxonomic scope" value="Eukaryota"/>
</dbReference>
<dbReference type="HOGENOM" id="CLU_023296_1_1_1"/>
<dbReference type="InParanoid" id="Q9XSG3"/>
<dbReference type="OrthoDB" id="248923at2759"/>
<dbReference type="TreeFam" id="TF300428"/>
<dbReference type="SABIO-RK" id="Q9XSG3"/>
<dbReference type="Proteomes" id="UP000009136">
    <property type="component" value="Unplaced"/>
</dbReference>
<dbReference type="GO" id="GO:0005737">
    <property type="term" value="C:cytoplasm"/>
    <property type="evidence" value="ECO:0000250"/>
    <property type="project" value="AgBase"/>
</dbReference>
<dbReference type="GO" id="GO:0005829">
    <property type="term" value="C:cytosol"/>
    <property type="evidence" value="ECO:0000250"/>
    <property type="project" value="AgBase"/>
</dbReference>
<dbReference type="GO" id="GO:0005739">
    <property type="term" value="C:mitochondrion"/>
    <property type="evidence" value="ECO:0000318"/>
    <property type="project" value="GO_Central"/>
</dbReference>
<dbReference type="GO" id="GO:0005777">
    <property type="term" value="C:peroxisome"/>
    <property type="evidence" value="ECO:0000318"/>
    <property type="project" value="GO_Central"/>
</dbReference>
<dbReference type="GO" id="GO:0004450">
    <property type="term" value="F:isocitrate dehydrogenase (NADP+) activity"/>
    <property type="evidence" value="ECO:0000250"/>
    <property type="project" value="UniProtKB"/>
</dbReference>
<dbReference type="GO" id="GO:0000287">
    <property type="term" value="F:magnesium ion binding"/>
    <property type="evidence" value="ECO:0000250"/>
    <property type="project" value="UniProtKB"/>
</dbReference>
<dbReference type="GO" id="GO:0051287">
    <property type="term" value="F:NAD binding"/>
    <property type="evidence" value="ECO:0007669"/>
    <property type="project" value="InterPro"/>
</dbReference>
<dbReference type="GO" id="GO:0006103">
    <property type="term" value="P:2-oxoglutarate metabolic process"/>
    <property type="evidence" value="ECO:0000250"/>
    <property type="project" value="UniProtKB"/>
</dbReference>
<dbReference type="GO" id="GO:0006097">
    <property type="term" value="P:glyoxylate cycle"/>
    <property type="evidence" value="ECO:0007669"/>
    <property type="project" value="UniProtKB-KW"/>
</dbReference>
<dbReference type="GO" id="GO:0006102">
    <property type="term" value="P:isocitrate metabolic process"/>
    <property type="evidence" value="ECO:0000250"/>
    <property type="project" value="UniProtKB"/>
</dbReference>
<dbReference type="GO" id="GO:0006739">
    <property type="term" value="P:NADP metabolic process"/>
    <property type="evidence" value="ECO:0000318"/>
    <property type="project" value="GO_Central"/>
</dbReference>
<dbReference type="GO" id="GO:0006979">
    <property type="term" value="P:response to oxidative stress"/>
    <property type="evidence" value="ECO:0000250"/>
    <property type="project" value="AgBase"/>
</dbReference>
<dbReference type="GO" id="GO:0006099">
    <property type="term" value="P:tricarboxylic acid cycle"/>
    <property type="evidence" value="ECO:0007669"/>
    <property type="project" value="UniProtKB-KW"/>
</dbReference>
<dbReference type="FunFam" id="3.40.718.10:FF:000002">
    <property type="entry name" value="Isocitrate dehydrogenase [NADP]"/>
    <property type="match status" value="1"/>
</dbReference>
<dbReference type="Gene3D" id="3.40.718.10">
    <property type="entry name" value="Isopropylmalate Dehydrogenase"/>
    <property type="match status" value="1"/>
</dbReference>
<dbReference type="InterPro" id="IPR019818">
    <property type="entry name" value="IsoCit/isopropylmalate_DH_CS"/>
</dbReference>
<dbReference type="InterPro" id="IPR004790">
    <property type="entry name" value="Isocitrate_DH_NADP"/>
</dbReference>
<dbReference type="InterPro" id="IPR024084">
    <property type="entry name" value="IsoPropMal-DH-like_dom"/>
</dbReference>
<dbReference type="NCBIfam" id="TIGR00127">
    <property type="entry name" value="nadp_idh_euk"/>
    <property type="match status" value="1"/>
</dbReference>
<dbReference type="NCBIfam" id="NF006156">
    <property type="entry name" value="PRK08299.1"/>
    <property type="match status" value="1"/>
</dbReference>
<dbReference type="PANTHER" id="PTHR11822:SF21">
    <property type="entry name" value="ISOCITRATE DEHYDROGENASE [NADP], MITOCHONDRIAL"/>
    <property type="match status" value="1"/>
</dbReference>
<dbReference type="PANTHER" id="PTHR11822">
    <property type="entry name" value="NADP-SPECIFIC ISOCITRATE DEHYDROGENASE"/>
    <property type="match status" value="1"/>
</dbReference>
<dbReference type="Pfam" id="PF00180">
    <property type="entry name" value="Iso_dh"/>
    <property type="match status" value="1"/>
</dbReference>
<dbReference type="PIRSF" id="PIRSF000108">
    <property type="entry name" value="IDH_NADP"/>
    <property type="match status" value="1"/>
</dbReference>
<dbReference type="SMART" id="SM01329">
    <property type="entry name" value="Iso_dh"/>
    <property type="match status" value="1"/>
</dbReference>
<dbReference type="SUPFAM" id="SSF53659">
    <property type="entry name" value="Isocitrate/Isopropylmalate dehydrogenase-like"/>
    <property type="match status" value="1"/>
</dbReference>
<dbReference type="PROSITE" id="PS00470">
    <property type="entry name" value="IDH_IMDH"/>
    <property type="match status" value="1"/>
</dbReference>
<protein>
    <recommendedName>
        <fullName>Isocitrate dehydrogenase [NADP] cytoplasmic</fullName>
        <shortName>IDH</shortName>
        <shortName>IDH1</shortName>
        <ecNumber evidence="3">1.1.1.42</ecNumber>
    </recommendedName>
    <alternativeName>
        <fullName>Cytosolic NADP-isocitrate dehydrogenase</fullName>
    </alternativeName>
    <alternativeName>
        <fullName>IDPc</fullName>
    </alternativeName>
    <alternativeName>
        <fullName>NADP(+)-specific ICDH</fullName>
    </alternativeName>
    <alternativeName>
        <fullName>Oxalosuccinate decarboxylase</fullName>
    </alternativeName>
</protein>
<proteinExistence type="evidence at transcript level"/>
<evidence type="ECO:0000250" key="1"/>
<evidence type="ECO:0000250" key="2">
    <source>
        <dbReference type="UniProtKB" id="O75874"/>
    </source>
</evidence>
<evidence type="ECO:0000250" key="3">
    <source>
        <dbReference type="UniProtKB" id="O88844"/>
    </source>
</evidence>
<evidence type="ECO:0000250" key="4">
    <source>
        <dbReference type="UniProtKB" id="P41562"/>
    </source>
</evidence>
<evidence type="ECO:0000269" key="5">
    <source>
    </source>
</evidence>
<evidence type="ECO:0000305" key="6"/>
<sequence>MSQKIQGGSVVEMQGDEMTRIIWELIKEKLIFPYVELDLHSYDLGIENRDATNDQVTKDAAEAIKKYNVGVKCATITPDEKRVEEFKLKQMWKSPNGTIRNILGGTVFREAIICKNIPRLVSGWVKPIIIGRHAYGDQYRATDFVVPGPGKVEISYTPSDGSPKTVYLVHNFTESGGVAMGMYNQDKSIEDFAHSSFQMALSKNWPLYLSTKNTILKKYDGRFKDIFQEIYDKQYKSEFEAQNIWYEHRLIDDMVAQAMKSEGGFIWACKNYDGDVQSDSVAQGYGSLGMMTSVLVCPDGKTVEAEAAHGTVTRHYRMYQKGQETLTNPIASIFAWTRGLAHRAKLDNNKELSFFAKALEEVCIETIEAGFMTKDLAACIKGLPNVQRSDYLNTFEFMDKLGENLQLKLAQAKL</sequence>
<reference key="1">
    <citation type="journal article" date="1999" name="J. Biol. Chem.">
        <title>Identification of a cytosolic NADP+-dependent isocitrate dehydrogenase that is preferentially expressed in bovine corneal epithelium. A corneal epithelial crystallin.</title>
        <authorList>
            <person name="Sun L."/>
            <person name="Sun T.T."/>
            <person name="Lavker R.M."/>
        </authorList>
    </citation>
    <scope>NUCLEOTIDE SEQUENCE [MRNA]</scope>
    <scope>FUNCTION</scope>
    <scope>TISSUE SPECIFICITY</scope>
</reference>
<reference key="2">
    <citation type="submission" date="2005-08" db="EMBL/GenBank/DDBJ databases">
        <authorList>
            <consortium name="NIH - Mammalian Gene Collection (MGC) project"/>
        </authorList>
    </citation>
    <scope>NUCLEOTIDE SEQUENCE [LARGE SCALE MRNA]</scope>
    <source>
        <strain>Crossbred X Angus</strain>
        <tissue>Ileum</tissue>
    </source>
</reference>
<accession>Q9XSG3</accession>
<accession>Q3SYV2</accession>
<organism>
    <name type="scientific">Bos taurus</name>
    <name type="common">Bovine</name>
    <dbReference type="NCBI Taxonomy" id="9913"/>
    <lineage>
        <taxon>Eukaryota</taxon>
        <taxon>Metazoa</taxon>
        <taxon>Chordata</taxon>
        <taxon>Craniata</taxon>
        <taxon>Vertebrata</taxon>
        <taxon>Euteleostomi</taxon>
        <taxon>Mammalia</taxon>
        <taxon>Eutheria</taxon>
        <taxon>Laurasiatheria</taxon>
        <taxon>Artiodactyla</taxon>
        <taxon>Ruminantia</taxon>
        <taxon>Pecora</taxon>
        <taxon>Bovidae</taxon>
        <taxon>Bovinae</taxon>
        <taxon>Bos</taxon>
    </lineage>
</organism>